<organism>
    <name type="scientific">Salinispora tropica (strain ATCC BAA-916 / DSM 44818 / JCM 13857 / NBRC 105044 / CNB-440)</name>
    <dbReference type="NCBI Taxonomy" id="369723"/>
    <lineage>
        <taxon>Bacteria</taxon>
        <taxon>Bacillati</taxon>
        <taxon>Actinomycetota</taxon>
        <taxon>Actinomycetes</taxon>
        <taxon>Micromonosporales</taxon>
        <taxon>Micromonosporaceae</taxon>
        <taxon>Salinispora</taxon>
    </lineage>
</organism>
<protein>
    <recommendedName>
        <fullName evidence="1">Bifunctional protein FolD 1</fullName>
    </recommendedName>
    <domain>
        <recommendedName>
            <fullName evidence="1">Methylenetetrahydrofolate dehydrogenase</fullName>
            <ecNumber evidence="1">1.5.1.5</ecNumber>
        </recommendedName>
    </domain>
    <domain>
        <recommendedName>
            <fullName evidence="1">Methenyltetrahydrofolate cyclohydrolase</fullName>
            <ecNumber evidence="1">3.5.4.9</ecNumber>
        </recommendedName>
    </domain>
</protein>
<evidence type="ECO:0000255" key="1">
    <source>
        <dbReference type="HAMAP-Rule" id="MF_01576"/>
    </source>
</evidence>
<evidence type="ECO:0000256" key="2">
    <source>
        <dbReference type="SAM" id="MobiDB-lite"/>
    </source>
</evidence>
<dbReference type="EC" id="1.5.1.5" evidence="1"/>
<dbReference type="EC" id="3.5.4.9" evidence="1"/>
<dbReference type="EMBL" id="CP000667">
    <property type="protein sequence ID" value="ABP54726.1"/>
    <property type="molecule type" value="Genomic_DNA"/>
</dbReference>
<dbReference type="RefSeq" id="WP_012013507.1">
    <property type="nucleotide sequence ID" value="NC_009380.1"/>
</dbReference>
<dbReference type="SMR" id="A4X776"/>
<dbReference type="STRING" id="369723.Strop_2276"/>
<dbReference type="KEGG" id="stp:Strop_2276"/>
<dbReference type="PATRIC" id="fig|369723.5.peg.2337"/>
<dbReference type="eggNOG" id="COG0190">
    <property type="taxonomic scope" value="Bacteria"/>
</dbReference>
<dbReference type="HOGENOM" id="CLU_034045_2_1_11"/>
<dbReference type="UniPathway" id="UPA00193"/>
<dbReference type="Proteomes" id="UP000000235">
    <property type="component" value="Chromosome"/>
</dbReference>
<dbReference type="GO" id="GO:0005829">
    <property type="term" value="C:cytosol"/>
    <property type="evidence" value="ECO:0007669"/>
    <property type="project" value="TreeGrafter"/>
</dbReference>
<dbReference type="GO" id="GO:0004477">
    <property type="term" value="F:methenyltetrahydrofolate cyclohydrolase activity"/>
    <property type="evidence" value="ECO:0007669"/>
    <property type="project" value="UniProtKB-UniRule"/>
</dbReference>
<dbReference type="GO" id="GO:0004488">
    <property type="term" value="F:methylenetetrahydrofolate dehydrogenase (NADP+) activity"/>
    <property type="evidence" value="ECO:0007669"/>
    <property type="project" value="UniProtKB-UniRule"/>
</dbReference>
<dbReference type="GO" id="GO:0000105">
    <property type="term" value="P:L-histidine biosynthetic process"/>
    <property type="evidence" value="ECO:0007669"/>
    <property type="project" value="UniProtKB-KW"/>
</dbReference>
<dbReference type="GO" id="GO:0009086">
    <property type="term" value="P:methionine biosynthetic process"/>
    <property type="evidence" value="ECO:0007669"/>
    <property type="project" value="UniProtKB-KW"/>
</dbReference>
<dbReference type="GO" id="GO:0006164">
    <property type="term" value="P:purine nucleotide biosynthetic process"/>
    <property type="evidence" value="ECO:0007669"/>
    <property type="project" value="UniProtKB-KW"/>
</dbReference>
<dbReference type="GO" id="GO:0035999">
    <property type="term" value="P:tetrahydrofolate interconversion"/>
    <property type="evidence" value="ECO:0007669"/>
    <property type="project" value="UniProtKB-UniRule"/>
</dbReference>
<dbReference type="CDD" id="cd01080">
    <property type="entry name" value="NAD_bind_m-THF_DH_Cyclohyd"/>
    <property type="match status" value="1"/>
</dbReference>
<dbReference type="FunFam" id="3.40.50.10860:FF:000005">
    <property type="entry name" value="C-1-tetrahydrofolate synthase, cytoplasmic, putative"/>
    <property type="match status" value="1"/>
</dbReference>
<dbReference type="Gene3D" id="3.40.50.10860">
    <property type="entry name" value="Leucine Dehydrogenase, chain A, domain 1"/>
    <property type="match status" value="1"/>
</dbReference>
<dbReference type="Gene3D" id="3.40.50.720">
    <property type="entry name" value="NAD(P)-binding Rossmann-like Domain"/>
    <property type="match status" value="1"/>
</dbReference>
<dbReference type="HAMAP" id="MF_01576">
    <property type="entry name" value="THF_DHG_CYH"/>
    <property type="match status" value="1"/>
</dbReference>
<dbReference type="InterPro" id="IPR046346">
    <property type="entry name" value="Aminoacid_DH-like_N_sf"/>
</dbReference>
<dbReference type="InterPro" id="IPR036291">
    <property type="entry name" value="NAD(P)-bd_dom_sf"/>
</dbReference>
<dbReference type="InterPro" id="IPR000672">
    <property type="entry name" value="THF_DH/CycHdrlase"/>
</dbReference>
<dbReference type="InterPro" id="IPR020630">
    <property type="entry name" value="THF_DH/CycHdrlase_cat_dom"/>
</dbReference>
<dbReference type="InterPro" id="IPR020631">
    <property type="entry name" value="THF_DH/CycHdrlase_NAD-bd_dom"/>
</dbReference>
<dbReference type="PANTHER" id="PTHR48099:SF5">
    <property type="entry name" value="C-1-TETRAHYDROFOLATE SYNTHASE, CYTOPLASMIC"/>
    <property type="match status" value="1"/>
</dbReference>
<dbReference type="PANTHER" id="PTHR48099">
    <property type="entry name" value="C-1-TETRAHYDROFOLATE SYNTHASE, CYTOPLASMIC-RELATED"/>
    <property type="match status" value="1"/>
</dbReference>
<dbReference type="Pfam" id="PF00763">
    <property type="entry name" value="THF_DHG_CYH"/>
    <property type="match status" value="1"/>
</dbReference>
<dbReference type="Pfam" id="PF02882">
    <property type="entry name" value="THF_DHG_CYH_C"/>
    <property type="match status" value="1"/>
</dbReference>
<dbReference type="PRINTS" id="PR00085">
    <property type="entry name" value="THFDHDRGNASE"/>
</dbReference>
<dbReference type="SUPFAM" id="SSF53223">
    <property type="entry name" value="Aminoacid dehydrogenase-like, N-terminal domain"/>
    <property type="match status" value="1"/>
</dbReference>
<dbReference type="SUPFAM" id="SSF51735">
    <property type="entry name" value="NAD(P)-binding Rossmann-fold domains"/>
    <property type="match status" value="1"/>
</dbReference>
<keyword id="KW-0028">Amino-acid biosynthesis</keyword>
<keyword id="KW-0368">Histidine biosynthesis</keyword>
<keyword id="KW-0378">Hydrolase</keyword>
<keyword id="KW-0486">Methionine biosynthesis</keyword>
<keyword id="KW-0511">Multifunctional enzyme</keyword>
<keyword id="KW-0521">NADP</keyword>
<keyword id="KW-0554">One-carbon metabolism</keyword>
<keyword id="KW-0560">Oxidoreductase</keyword>
<keyword id="KW-0658">Purine biosynthesis</keyword>
<keyword id="KW-1185">Reference proteome</keyword>
<name>FOLD1_SALTO</name>
<accession>A4X776</accession>
<feature type="chain" id="PRO_0000340595" description="Bifunctional protein FolD 1">
    <location>
        <begin position="1"/>
        <end position="306"/>
    </location>
</feature>
<feature type="region of interest" description="Disordered" evidence="2">
    <location>
        <begin position="285"/>
        <end position="306"/>
    </location>
</feature>
<feature type="binding site" evidence="1">
    <location>
        <begin position="170"/>
        <end position="172"/>
    </location>
    <ligand>
        <name>NADP(+)</name>
        <dbReference type="ChEBI" id="CHEBI:58349"/>
    </ligand>
</feature>
<feature type="binding site" evidence="1">
    <location>
        <position position="199"/>
    </location>
    <ligand>
        <name>NADP(+)</name>
        <dbReference type="ChEBI" id="CHEBI:58349"/>
    </ligand>
</feature>
<feature type="binding site" evidence="1">
    <location>
        <position position="240"/>
    </location>
    <ligand>
        <name>NADP(+)</name>
        <dbReference type="ChEBI" id="CHEBI:58349"/>
    </ligand>
</feature>
<reference key="1">
    <citation type="journal article" date="2007" name="Proc. Natl. Acad. Sci. U.S.A.">
        <title>Genome sequencing reveals complex secondary metabolome in the marine actinomycete Salinispora tropica.</title>
        <authorList>
            <person name="Udwary D.W."/>
            <person name="Zeigler L."/>
            <person name="Asolkar R.N."/>
            <person name="Singan V."/>
            <person name="Lapidus A."/>
            <person name="Fenical W."/>
            <person name="Jensen P.R."/>
            <person name="Moore B.S."/>
        </authorList>
    </citation>
    <scope>NUCLEOTIDE SEQUENCE [LARGE SCALE GENOMIC DNA]</scope>
    <source>
        <strain>ATCC BAA-916 / DSM 44818 / JCM 13857 / NBRC 105044 / CNB-440</strain>
    </source>
</reference>
<sequence length="306" mass="31813">MSTSMSVARSLPGGPVAEQILAEVAQEVTQLRAAGVTPALATVLVGDDDASVGYIRIKQRQAVQLGFASPHVRLPASASQADLQAVVTQLSADTSVHGVLVQHPVPPHLDFDRAMQALDPEKDVDGMHPVNLGRLALGLPGPTPCTPAGIEALLAYHEVPVAGREVVVLGRGATLGRPLAMVLAQKRPTANAAVTVVHTGVPDWPRYTRRAEIVVAAAGVPGLVRPEHLRPGAVVVNGGVRYAGRRLLPDVDESCATVAGAMTPRVGGVGPTTVAMLFRNAVRAARRTRSSRTPVRLPDSGAPAGR</sequence>
<gene>
    <name evidence="1" type="primary">folD1</name>
    <name type="ordered locus">Strop_2276</name>
</gene>
<comment type="function">
    <text evidence="1">Catalyzes the oxidation of 5,10-methylenetetrahydrofolate to 5,10-methenyltetrahydrofolate and then the hydrolysis of 5,10-methenyltetrahydrofolate to 10-formyltetrahydrofolate.</text>
</comment>
<comment type="catalytic activity">
    <reaction evidence="1">
        <text>(6R)-5,10-methylene-5,6,7,8-tetrahydrofolate + NADP(+) = (6R)-5,10-methenyltetrahydrofolate + NADPH</text>
        <dbReference type="Rhea" id="RHEA:22812"/>
        <dbReference type="ChEBI" id="CHEBI:15636"/>
        <dbReference type="ChEBI" id="CHEBI:57455"/>
        <dbReference type="ChEBI" id="CHEBI:57783"/>
        <dbReference type="ChEBI" id="CHEBI:58349"/>
        <dbReference type="EC" id="1.5.1.5"/>
    </reaction>
</comment>
<comment type="catalytic activity">
    <reaction evidence="1">
        <text>(6R)-5,10-methenyltetrahydrofolate + H2O = (6R)-10-formyltetrahydrofolate + H(+)</text>
        <dbReference type="Rhea" id="RHEA:23700"/>
        <dbReference type="ChEBI" id="CHEBI:15377"/>
        <dbReference type="ChEBI" id="CHEBI:15378"/>
        <dbReference type="ChEBI" id="CHEBI:57455"/>
        <dbReference type="ChEBI" id="CHEBI:195366"/>
        <dbReference type="EC" id="3.5.4.9"/>
    </reaction>
</comment>
<comment type="pathway">
    <text evidence="1">One-carbon metabolism; tetrahydrofolate interconversion.</text>
</comment>
<comment type="subunit">
    <text evidence="1">Homodimer.</text>
</comment>
<comment type="similarity">
    <text evidence="1">Belongs to the tetrahydrofolate dehydrogenase/cyclohydrolase family.</text>
</comment>
<proteinExistence type="inferred from homology"/>